<gene>
    <name type="primary">F8a1</name>
    <name type="synonym">F8a</name>
    <name type="synonym">Hap40</name>
</gene>
<organism>
    <name type="scientific">Mus musculus</name>
    <name type="common">Mouse</name>
    <dbReference type="NCBI Taxonomy" id="10090"/>
    <lineage>
        <taxon>Eukaryota</taxon>
        <taxon>Metazoa</taxon>
        <taxon>Chordata</taxon>
        <taxon>Craniata</taxon>
        <taxon>Vertebrata</taxon>
        <taxon>Euteleostomi</taxon>
        <taxon>Mammalia</taxon>
        <taxon>Eutheria</taxon>
        <taxon>Euarchontoglires</taxon>
        <taxon>Glires</taxon>
        <taxon>Rodentia</taxon>
        <taxon>Myomorpha</taxon>
        <taxon>Muroidea</taxon>
        <taxon>Muridae</taxon>
        <taxon>Murinae</taxon>
        <taxon>Mus</taxon>
        <taxon>Mus</taxon>
    </lineage>
</organism>
<proteinExistence type="evidence at protein level"/>
<accession>Q00558</accession>
<accession>Q3TLS9</accession>
<accession>Q9JJQ6</accession>
<evidence type="ECO:0000250" key="1">
    <source>
        <dbReference type="UniProtKB" id="M0RDU0"/>
    </source>
</evidence>
<evidence type="ECO:0000250" key="2">
    <source>
        <dbReference type="UniProtKB" id="P23610"/>
    </source>
</evidence>
<evidence type="ECO:0000256" key="3">
    <source>
        <dbReference type="SAM" id="MobiDB-lite"/>
    </source>
</evidence>
<evidence type="ECO:0000269" key="4">
    <source>
    </source>
</evidence>
<evidence type="ECO:0000269" key="5">
    <source>
    </source>
</evidence>
<evidence type="ECO:0000269" key="6">
    <source>
    </source>
</evidence>
<evidence type="ECO:0000303" key="7">
    <source>
    </source>
</evidence>
<evidence type="ECO:0000305" key="8"/>
<feature type="initiator methionine" description="Removed" evidence="2">
    <location>
        <position position="1"/>
    </location>
</feature>
<feature type="chain" id="PRO_0000087160" description="40-kDa huntingtin-associated protein">
    <location>
        <begin position="2"/>
        <end position="381"/>
    </location>
</feature>
<feature type="region of interest" description="Disordered" evidence="3">
    <location>
        <begin position="221"/>
        <end position="265"/>
    </location>
</feature>
<feature type="short sequence motif" description="Nuclear localization signal" evidence="4">
    <location>
        <begin position="34"/>
        <end position="36"/>
    </location>
</feature>
<feature type="compositionally biased region" description="Pro residues" evidence="3">
    <location>
        <begin position="226"/>
        <end position="242"/>
    </location>
</feature>
<feature type="modified residue" description="N-acetylalanine" evidence="2">
    <location>
        <position position="2"/>
    </location>
</feature>
<feature type="mutagenesis site" description="Not detected in nucleus. Redistributed in cytoplasm." evidence="4">
    <original>KKR</original>
    <variation>STS</variation>
    <location>
        <begin position="34"/>
        <end position="36"/>
    </location>
</feature>
<feature type="sequence conflict" description="In Ref. 1; AAA37588." evidence="8" ref="1">
    <location>
        <position position="124"/>
    </location>
</feature>
<feature type="sequence conflict" description="In Ref. 1; AAA37588." evidence="8" ref="1">
    <original>A</original>
    <variation>D</variation>
    <location>
        <position position="127"/>
    </location>
</feature>
<feature type="sequence conflict" description="In Ref. 3; BAE38713." evidence="8" ref="3">
    <original>L</original>
    <variation>H</variation>
    <location>
        <position position="152"/>
    </location>
</feature>
<feature type="sequence conflict" description="In Ref. 1; AAA37588." evidence="8" ref="1">
    <original>L</original>
    <variation>R</variation>
    <location>
        <position position="171"/>
    </location>
</feature>
<reference key="1">
    <citation type="journal article" date="1992" name="Genomics">
        <title>Sequence of the human factor VIII-associated gene is conserved in mouse.</title>
        <authorList>
            <person name="Levinson B."/>
            <person name="Bermingham J.R. Jr."/>
            <person name="Metzenberg A."/>
            <person name="Kenwrick S."/>
            <person name="Chapman V."/>
            <person name="Gitschier J."/>
        </authorList>
    </citation>
    <scope>NUCLEOTIDE SEQUENCE [MRNA]</scope>
    <source>
        <strain>CBA/J</strain>
    </source>
</reference>
<reference key="2">
    <citation type="journal article" date="2001" name="J. Biol. Chem.">
        <title>Isolation of a 40-kDa Huntingtin-associated protein.</title>
        <authorList>
            <person name="Peters M.F."/>
            <person name="Ross C.A."/>
        </authorList>
    </citation>
    <scope>NUCLEOTIDE SEQUENCE [MRNA]</scope>
    <scope>INTERACTION WITH HTT</scope>
    <scope>SUBCELLULAR LOCATION</scope>
    <scope>MUTAGENESIS OF 34-LYS--ARG-36</scope>
    <source>
        <strain>C57BL/6J</strain>
    </source>
</reference>
<reference key="3">
    <citation type="journal article" date="2005" name="Science">
        <title>The transcriptional landscape of the mammalian genome.</title>
        <authorList>
            <person name="Carninci P."/>
            <person name="Kasukawa T."/>
            <person name="Katayama S."/>
            <person name="Gough J."/>
            <person name="Frith M.C."/>
            <person name="Maeda N."/>
            <person name="Oyama R."/>
            <person name="Ravasi T."/>
            <person name="Lenhard B."/>
            <person name="Wells C."/>
            <person name="Kodzius R."/>
            <person name="Shimokawa K."/>
            <person name="Bajic V.B."/>
            <person name="Brenner S.E."/>
            <person name="Batalov S."/>
            <person name="Forrest A.R."/>
            <person name="Zavolan M."/>
            <person name="Davis M.J."/>
            <person name="Wilming L.G."/>
            <person name="Aidinis V."/>
            <person name="Allen J.E."/>
            <person name="Ambesi-Impiombato A."/>
            <person name="Apweiler R."/>
            <person name="Aturaliya R.N."/>
            <person name="Bailey T.L."/>
            <person name="Bansal M."/>
            <person name="Baxter L."/>
            <person name="Beisel K.W."/>
            <person name="Bersano T."/>
            <person name="Bono H."/>
            <person name="Chalk A.M."/>
            <person name="Chiu K.P."/>
            <person name="Choudhary V."/>
            <person name="Christoffels A."/>
            <person name="Clutterbuck D.R."/>
            <person name="Crowe M.L."/>
            <person name="Dalla E."/>
            <person name="Dalrymple B.P."/>
            <person name="de Bono B."/>
            <person name="Della Gatta G."/>
            <person name="di Bernardo D."/>
            <person name="Down T."/>
            <person name="Engstrom P."/>
            <person name="Fagiolini M."/>
            <person name="Faulkner G."/>
            <person name="Fletcher C.F."/>
            <person name="Fukushima T."/>
            <person name="Furuno M."/>
            <person name="Futaki S."/>
            <person name="Gariboldi M."/>
            <person name="Georgii-Hemming P."/>
            <person name="Gingeras T.R."/>
            <person name="Gojobori T."/>
            <person name="Green R.E."/>
            <person name="Gustincich S."/>
            <person name="Harbers M."/>
            <person name="Hayashi Y."/>
            <person name="Hensch T.K."/>
            <person name="Hirokawa N."/>
            <person name="Hill D."/>
            <person name="Huminiecki L."/>
            <person name="Iacono M."/>
            <person name="Ikeo K."/>
            <person name="Iwama A."/>
            <person name="Ishikawa T."/>
            <person name="Jakt M."/>
            <person name="Kanapin A."/>
            <person name="Katoh M."/>
            <person name="Kawasawa Y."/>
            <person name="Kelso J."/>
            <person name="Kitamura H."/>
            <person name="Kitano H."/>
            <person name="Kollias G."/>
            <person name="Krishnan S.P."/>
            <person name="Kruger A."/>
            <person name="Kummerfeld S.K."/>
            <person name="Kurochkin I.V."/>
            <person name="Lareau L.F."/>
            <person name="Lazarevic D."/>
            <person name="Lipovich L."/>
            <person name="Liu J."/>
            <person name="Liuni S."/>
            <person name="McWilliam S."/>
            <person name="Madan Babu M."/>
            <person name="Madera M."/>
            <person name="Marchionni L."/>
            <person name="Matsuda H."/>
            <person name="Matsuzawa S."/>
            <person name="Miki H."/>
            <person name="Mignone F."/>
            <person name="Miyake S."/>
            <person name="Morris K."/>
            <person name="Mottagui-Tabar S."/>
            <person name="Mulder N."/>
            <person name="Nakano N."/>
            <person name="Nakauchi H."/>
            <person name="Ng P."/>
            <person name="Nilsson R."/>
            <person name="Nishiguchi S."/>
            <person name="Nishikawa S."/>
            <person name="Nori F."/>
            <person name="Ohara O."/>
            <person name="Okazaki Y."/>
            <person name="Orlando V."/>
            <person name="Pang K.C."/>
            <person name="Pavan W.J."/>
            <person name="Pavesi G."/>
            <person name="Pesole G."/>
            <person name="Petrovsky N."/>
            <person name="Piazza S."/>
            <person name="Reed J."/>
            <person name="Reid J.F."/>
            <person name="Ring B.Z."/>
            <person name="Ringwald M."/>
            <person name="Rost B."/>
            <person name="Ruan Y."/>
            <person name="Salzberg S.L."/>
            <person name="Sandelin A."/>
            <person name="Schneider C."/>
            <person name="Schoenbach C."/>
            <person name="Sekiguchi K."/>
            <person name="Semple C.A."/>
            <person name="Seno S."/>
            <person name="Sessa L."/>
            <person name="Sheng Y."/>
            <person name="Shibata Y."/>
            <person name="Shimada H."/>
            <person name="Shimada K."/>
            <person name="Silva D."/>
            <person name="Sinclair B."/>
            <person name="Sperling S."/>
            <person name="Stupka E."/>
            <person name="Sugiura K."/>
            <person name="Sultana R."/>
            <person name="Takenaka Y."/>
            <person name="Taki K."/>
            <person name="Tammoja K."/>
            <person name="Tan S.L."/>
            <person name="Tang S."/>
            <person name="Taylor M.S."/>
            <person name="Tegner J."/>
            <person name="Teichmann S.A."/>
            <person name="Ueda H.R."/>
            <person name="van Nimwegen E."/>
            <person name="Verardo R."/>
            <person name="Wei C.L."/>
            <person name="Yagi K."/>
            <person name="Yamanishi H."/>
            <person name="Zabarovsky E."/>
            <person name="Zhu S."/>
            <person name="Zimmer A."/>
            <person name="Hide W."/>
            <person name="Bult C."/>
            <person name="Grimmond S.M."/>
            <person name="Teasdale R.D."/>
            <person name="Liu E.T."/>
            <person name="Brusic V."/>
            <person name="Quackenbush J."/>
            <person name="Wahlestedt C."/>
            <person name="Mattick J.S."/>
            <person name="Hume D.A."/>
            <person name="Kai C."/>
            <person name="Sasaki D."/>
            <person name="Tomaru Y."/>
            <person name="Fukuda S."/>
            <person name="Kanamori-Katayama M."/>
            <person name="Suzuki M."/>
            <person name="Aoki J."/>
            <person name="Arakawa T."/>
            <person name="Iida J."/>
            <person name="Imamura K."/>
            <person name="Itoh M."/>
            <person name="Kato T."/>
            <person name="Kawaji H."/>
            <person name="Kawagashira N."/>
            <person name="Kawashima T."/>
            <person name="Kojima M."/>
            <person name="Kondo S."/>
            <person name="Konno H."/>
            <person name="Nakano K."/>
            <person name="Ninomiya N."/>
            <person name="Nishio T."/>
            <person name="Okada M."/>
            <person name="Plessy C."/>
            <person name="Shibata K."/>
            <person name="Shiraki T."/>
            <person name="Suzuki S."/>
            <person name="Tagami M."/>
            <person name="Waki K."/>
            <person name="Watahiki A."/>
            <person name="Okamura-Oho Y."/>
            <person name="Suzuki H."/>
            <person name="Kawai J."/>
            <person name="Hayashizaki Y."/>
        </authorList>
    </citation>
    <scope>NUCLEOTIDE SEQUENCE [LARGE SCALE MRNA]</scope>
    <source>
        <strain>C57BL/6J</strain>
        <tissue>Corpora quadrigemina</tissue>
        <tissue>Mammary gland</tissue>
        <tissue>Oviduct</tissue>
    </source>
</reference>
<reference key="4">
    <citation type="journal article" date="2009" name="PLoS Biol.">
        <title>Lineage-specific biology revealed by a finished genome assembly of the mouse.</title>
        <authorList>
            <person name="Church D.M."/>
            <person name="Goodstadt L."/>
            <person name="Hillier L.W."/>
            <person name="Zody M.C."/>
            <person name="Goldstein S."/>
            <person name="She X."/>
            <person name="Bult C.J."/>
            <person name="Agarwala R."/>
            <person name="Cherry J.L."/>
            <person name="DiCuccio M."/>
            <person name="Hlavina W."/>
            <person name="Kapustin Y."/>
            <person name="Meric P."/>
            <person name="Maglott D."/>
            <person name="Birtle Z."/>
            <person name="Marques A.C."/>
            <person name="Graves T."/>
            <person name="Zhou S."/>
            <person name="Teague B."/>
            <person name="Potamousis K."/>
            <person name="Churas C."/>
            <person name="Place M."/>
            <person name="Herschleb J."/>
            <person name="Runnheim R."/>
            <person name="Forrest D."/>
            <person name="Amos-Landgraf J."/>
            <person name="Schwartz D.C."/>
            <person name="Cheng Z."/>
            <person name="Lindblad-Toh K."/>
            <person name="Eichler E.E."/>
            <person name="Ponting C.P."/>
        </authorList>
    </citation>
    <scope>NUCLEOTIDE SEQUENCE [LARGE SCALE GENOMIC DNA]</scope>
    <source>
        <strain>C57BL/6J</strain>
    </source>
</reference>
<reference key="5">
    <citation type="journal article" date="2004" name="Genome Res.">
        <title>The status, quality, and expansion of the NIH full-length cDNA project: the Mammalian Gene Collection (MGC).</title>
        <authorList>
            <consortium name="The MGC Project Team"/>
        </authorList>
    </citation>
    <scope>NUCLEOTIDE SEQUENCE [LARGE SCALE MRNA]</scope>
    <source>
        <tissue>Brain</tissue>
    </source>
</reference>
<reference key="6">
    <citation type="journal article" date="2010" name="Cell">
        <title>A tissue-specific atlas of mouse protein phosphorylation and expression.</title>
        <authorList>
            <person name="Huttlin E.L."/>
            <person name="Jedrychowski M.P."/>
            <person name="Elias J.E."/>
            <person name="Goswami T."/>
            <person name="Rad R."/>
            <person name="Beausoleil S.A."/>
            <person name="Villen J."/>
            <person name="Haas W."/>
            <person name="Sowa M.E."/>
            <person name="Gygi S.P."/>
        </authorList>
    </citation>
    <scope>IDENTIFICATION BY MASS SPECTROMETRY [LARGE SCALE ANALYSIS]</scope>
    <source>
        <tissue>Brain</tissue>
        <tissue>Lung</tissue>
        <tissue>Spleen</tissue>
    </source>
</reference>
<reference key="7">
    <citation type="journal article" date="2006" name="J. Cell Biol.">
        <title>Huntingtin-HAP40 complex is a novel Rab5 effector that regulates early endosome motility and is up-regulated in Huntington's disease.</title>
        <authorList>
            <person name="Pal A."/>
            <person name="Severin F."/>
            <person name="Lommer B."/>
            <person name="Shevchenko A."/>
            <person name="Zerial M."/>
        </authorList>
    </citation>
    <scope>FUNCTION</scope>
</reference>
<reference key="8">
    <citation type="journal article" date="2013" name="J. Comp. Neurol.">
        <title>Novel variant of neuronal intranuclear rodlet immunoreactive for 40 kDa huntingtin associated protein and ubiquitin in the mouse brain.</title>
        <authorList>
            <person name="Milman P."/>
            <person name="Woulfe J."/>
        </authorList>
    </citation>
    <scope>SUBCELLULAR LOCATION</scope>
</reference>
<name>HAP40_MOUSE</name>
<sequence length="381" mass="40474">MAAGSASSLGGGAWPGSEAGDFLARYRQVSNKLKKRFLRKPNVAEAGEQFAQLARELRAQECLPYAAWCQLAVARCQQALFHGPGEALALTEAARLFLRQECDARQRLGCPAAYGEPLQAAASALGAAVRLHLELGQPAAAAALCLELAAALRAVGQPAAAAGHFQRAAQLHLPLMPLAALQALGDAASCQLLARDYTGALALFTRMQRLAREHGGHPVQQLELLPQPPSGPQPPLSGPQPRPVLGSTLPLPQPPDHAPGSVAPSPGTLGAFADVLVRCEVSRVLLLLLLQPPPAKLLPEHAQTLEKYSWEAFDGHGQDTSGQLPEELFLLLQSLVMAAQEKDTEGIKKLQVEMWPLLTAEQNHLLHLVLQETISPSGQGV</sequence>
<keyword id="KW-0007">Acetylation</keyword>
<keyword id="KW-0963">Cytoplasm</keyword>
<keyword id="KW-0967">Endosome</keyword>
<keyword id="KW-0539">Nucleus</keyword>
<keyword id="KW-1185">Reference proteome</keyword>
<protein>
    <recommendedName>
        <fullName evidence="7">40-kDa huntingtin-associated protein</fullName>
    </recommendedName>
    <alternativeName>
        <fullName>CpG island protein</fullName>
    </alternativeName>
    <alternativeName>
        <fullName>Factor VIII intron 22 protein</fullName>
    </alternativeName>
</protein>
<comment type="function">
    <text evidence="2 5">RAB5A effector molecule that is involved in vesicular trafficking of early endosomes. Mediates the recruitment of HTT by RAB5A onto early endosomes (By similarity). The HTT-F8A1/F8A2/F8A3-RAB5A complex stimulates early endosomal interaction with actin filaments and inhibits interaction with microtubules, leading to the reduction of endosome motility (PubMed:16476778).</text>
</comment>
<comment type="subunit">
    <text evidence="1 4">Interacts with HTT (via C-terminus) (PubMed:11035034). Interacts with RAB5A (By similarity). Found in a complex with F8A1/F8A2/F8A3, HTT and RAB5A; mediates the recruitment of HTT by RAB5A onto early endosomes (By similarity).</text>
</comment>
<comment type="subcellular location">
    <subcellularLocation>
        <location evidence="4 6">Cytoplasm</location>
    </subcellularLocation>
    <subcellularLocation>
        <location evidence="4 6">Nucleus</location>
    </subcellularLocation>
    <subcellularLocation>
        <location evidence="2">Early endosome</location>
    </subcellularLocation>
    <subcellularLocation>
        <location evidence="6">Nucleus</location>
        <location evidence="6">Nuclear body</location>
    </subcellularLocation>
    <text evidence="2 4 6">Diffuse presence in the cytoplasm and accumulation in the nucleus (By similarity). In absence of HTT, F8A1/F8A2/F8A3 is concentred in cytoplasm (PubMed:11035034). Colocalized with HTT in endosomes (By similarity). In neuron found in intranuclear structures, the intranuclear rodlets (INRs), also known as rodlets of Roncoroni, in association with ubiquitin (PubMed:23749422).</text>
</comment>
<comment type="tissue specificity">
    <text>Produced abundantly in a wide variety of cell types.</text>
</comment>
<dbReference type="EMBL" id="M83118">
    <property type="protein sequence ID" value="AAA37588.1"/>
    <property type="molecule type" value="mRNA"/>
</dbReference>
<dbReference type="EMBL" id="AF299331">
    <property type="protein sequence ID" value="AAG17919.1"/>
    <property type="molecule type" value="mRNA"/>
</dbReference>
<dbReference type="EMBL" id="AL136328">
    <property type="protein sequence ID" value="CAB88074.1"/>
    <property type="molecule type" value="Genomic_DNA"/>
</dbReference>
<dbReference type="EMBL" id="AK046459">
    <property type="protein sequence ID" value="BAC32739.1"/>
    <property type="molecule type" value="mRNA"/>
</dbReference>
<dbReference type="EMBL" id="AK054140">
    <property type="protein sequence ID" value="BAC35668.1"/>
    <property type="molecule type" value="mRNA"/>
</dbReference>
<dbReference type="EMBL" id="AK166334">
    <property type="protein sequence ID" value="BAE38713.1"/>
    <property type="molecule type" value="mRNA"/>
</dbReference>
<dbReference type="EMBL" id="BC131938">
    <property type="protein sequence ID" value="AAI31939.1"/>
    <property type="molecule type" value="mRNA"/>
</dbReference>
<dbReference type="EMBL" id="BC131940">
    <property type="protein sequence ID" value="AAI31941.1"/>
    <property type="molecule type" value="mRNA"/>
</dbReference>
<dbReference type="CCDS" id="CCDS41011.1"/>
<dbReference type="PIR" id="A42832">
    <property type="entry name" value="A42832"/>
</dbReference>
<dbReference type="RefSeq" id="NP_032004.2">
    <property type="nucleotide sequence ID" value="NM_007978.3"/>
</dbReference>
<dbReference type="SMR" id="Q00558"/>
<dbReference type="FunCoup" id="Q00558">
    <property type="interactions" value="897"/>
</dbReference>
<dbReference type="STRING" id="10090.ENSMUSP00000100743"/>
<dbReference type="PhosphoSitePlus" id="Q00558"/>
<dbReference type="PaxDb" id="10090-ENSMUSP00000100743"/>
<dbReference type="PeptideAtlas" id="Q00558"/>
<dbReference type="ProteomicsDB" id="275734"/>
<dbReference type="ProteomicsDB" id="343229"/>
<dbReference type="Pumba" id="Q00558"/>
<dbReference type="DNASU" id="14070"/>
<dbReference type="Ensembl" id="ENSMUST00000105111.4">
    <property type="protein sequence ID" value="ENSMUSP00000100743.3"/>
    <property type="gene ID" value="ENSMUSG00000078317.7"/>
</dbReference>
<dbReference type="GeneID" id="14070"/>
<dbReference type="KEGG" id="mmu:14070"/>
<dbReference type="UCSC" id="uc009tlk.1">
    <property type="organism name" value="mouse"/>
</dbReference>
<dbReference type="AGR" id="MGI:95474"/>
<dbReference type="CTD" id="14070"/>
<dbReference type="MGI" id="MGI:95474">
    <property type="gene designation" value="F8a"/>
</dbReference>
<dbReference type="VEuPathDB" id="HostDB:ENSMUSG00000078317"/>
<dbReference type="eggNOG" id="ENOG502QQQW">
    <property type="taxonomic scope" value="Eukaryota"/>
</dbReference>
<dbReference type="GeneTree" id="ENSGT00390000016992"/>
<dbReference type="HOGENOM" id="CLU_076185_0_0_1"/>
<dbReference type="InParanoid" id="Q00558"/>
<dbReference type="OMA" id="ELWQYAG"/>
<dbReference type="OrthoDB" id="10249246at2759"/>
<dbReference type="TreeFam" id="TF313929"/>
<dbReference type="BioGRID-ORCS" id="14070">
    <property type="hits" value="11 hits in 76 CRISPR screens"/>
</dbReference>
<dbReference type="PRO" id="PR:Q00558"/>
<dbReference type="Proteomes" id="UP000000589">
    <property type="component" value="Chromosome X"/>
</dbReference>
<dbReference type="RNAct" id="Q00558">
    <property type="molecule type" value="protein"/>
</dbReference>
<dbReference type="Bgee" id="ENSMUSG00000078317">
    <property type="expression patterns" value="Expressed in primary oocyte and 158 other cell types or tissues"/>
</dbReference>
<dbReference type="GO" id="GO:0005737">
    <property type="term" value="C:cytoplasm"/>
    <property type="evidence" value="ECO:0000314"/>
    <property type="project" value="UniProtKB"/>
</dbReference>
<dbReference type="GO" id="GO:0005769">
    <property type="term" value="C:early endosome"/>
    <property type="evidence" value="ECO:0000250"/>
    <property type="project" value="UniProtKB"/>
</dbReference>
<dbReference type="GO" id="GO:0016604">
    <property type="term" value="C:nuclear body"/>
    <property type="evidence" value="ECO:0000314"/>
    <property type="project" value="UniProtKB"/>
</dbReference>
<dbReference type="GO" id="GO:0005634">
    <property type="term" value="C:nucleus"/>
    <property type="evidence" value="ECO:0000314"/>
    <property type="project" value="UniProtKB"/>
</dbReference>
<dbReference type="GO" id="GO:1901799">
    <property type="term" value="P:negative regulation of proteasomal protein catabolic process"/>
    <property type="evidence" value="ECO:0000250"/>
    <property type="project" value="UniProtKB"/>
</dbReference>
<dbReference type="GO" id="GO:0099518">
    <property type="term" value="P:vesicle cytoskeletal trafficking"/>
    <property type="evidence" value="ECO:0000250"/>
    <property type="project" value="UniProtKB"/>
</dbReference>
<dbReference type="FunFam" id="1.25.40.10:FF:000335">
    <property type="entry name" value="Factor VIII intron 22 protein"/>
    <property type="match status" value="1"/>
</dbReference>
<dbReference type="Gene3D" id="1.25.40.10">
    <property type="entry name" value="Tetratricopeptide repeat domain"/>
    <property type="match status" value="1"/>
</dbReference>
<dbReference type="InterPro" id="IPR039494">
    <property type="entry name" value="F8A"/>
</dbReference>
<dbReference type="InterPro" id="IPR011990">
    <property type="entry name" value="TPR-like_helical_dom_sf"/>
</dbReference>
<dbReference type="PANTHER" id="PTHR16797:SF4">
    <property type="entry name" value="40-KDA HUNTINGTIN-ASSOCIATED PROTEIN"/>
    <property type="match status" value="1"/>
</dbReference>
<dbReference type="PANTHER" id="PTHR16797">
    <property type="entry name" value="FACTOR VIII-ASSOCIATED GENE 1"/>
    <property type="match status" value="1"/>
</dbReference>
<dbReference type="SUPFAM" id="SSF48452">
    <property type="entry name" value="TPR-like"/>
    <property type="match status" value="1"/>
</dbReference>